<proteinExistence type="inferred from homology"/>
<evidence type="ECO:0000255" key="1">
    <source>
        <dbReference type="HAMAP-Rule" id="MF_00741"/>
    </source>
</evidence>
<dbReference type="EC" id="6.3.3.1" evidence="1"/>
<dbReference type="EMBL" id="CP000111">
    <property type="protein sequence ID" value="ABB50742.1"/>
    <property type="molecule type" value="Genomic_DNA"/>
</dbReference>
<dbReference type="RefSeq" id="WP_011377223.1">
    <property type="nucleotide sequence ID" value="NC_007577.1"/>
</dbReference>
<dbReference type="SMR" id="Q318F3"/>
<dbReference type="STRING" id="74546.PMT9312_1681"/>
<dbReference type="KEGG" id="pmi:PMT9312_1681"/>
<dbReference type="eggNOG" id="COG0150">
    <property type="taxonomic scope" value="Bacteria"/>
</dbReference>
<dbReference type="HOGENOM" id="CLU_047116_0_0_3"/>
<dbReference type="OrthoDB" id="9802507at2"/>
<dbReference type="UniPathway" id="UPA00074">
    <property type="reaction ID" value="UER00129"/>
</dbReference>
<dbReference type="Proteomes" id="UP000002715">
    <property type="component" value="Chromosome"/>
</dbReference>
<dbReference type="GO" id="GO:0005829">
    <property type="term" value="C:cytosol"/>
    <property type="evidence" value="ECO:0007669"/>
    <property type="project" value="TreeGrafter"/>
</dbReference>
<dbReference type="GO" id="GO:0005524">
    <property type="term" value="F:ATP binding"/>
    <property type="evidence" value="ECO:0007669"/>
    <property type="project" value="UniProtKB-KW"/>
</dbReference>
<dbReference type="GO" id="GO:0004637">
    <property type="term" value="F:phosphoribosylamine-glycine ligase activity"/>
    <property type="evidence" value="ECO:0007669"/>
    <property type="project" value="TreeGrafter"/>
</dbReference>
<dbReference type="GO" id="GO:0004641">
    <property type="term" value="F:phosphoribosylformylglycinamidine cyclo-ligase activity"/>
    <property type="evidence" value="ECO:0007669"/>
    <property type="project" value="UniProtKB-UniRule"/>
</dbReference>
<dbReference type="GO" id="GO:0006189">
    <property type="term" value="P:'de novo' IMP biosynthetic process"/>
    <property type="evidence" value="ECO:0007669"/>
    <property type="project" value="UniProtKB-UniRule"/>
</dbReference>
<dbReference type="GO" id="GO:0046084">
    <property type="term" value="P:adenine biosynthetic process"/>
    <property type="evidence" value="ECO:0007669"/>
    <property type="project" value="TreeGrafter"/>
</dbReference>
<dbReference type="CDD" id="cd02196">
    <property type="entry name" value="PurM"/>
    <property type="match status" value="1"/>
</dbReference>
<dbReference type="FunFam" id="3.30.1330.10:FF:000001">
    <property type="entry name" value="Phosphoribosylformylglycinamidine cyclo-ligase"/>
    <property type="match status" value="1"/>
</dbReference>
<dbReference type="FunFam" id="3.90.650.10:FF:000011">
    <property type="entry name" value="Phosphoribosylformylglycinamidine cyclo-ligase"/>
    <property type="match status" value="1"/>
</dbReference>
<dbReference type="Gene3D" id="3.90.650.10">
    <property type="entry name" value="PurM-like C-terminal domain"/>
    <property type="match status" value="1"/>
</dbReference>
<dbReference type="Gene3D" id="3.30.1330.10">
    <property type="entry name" value="PurM-like, N-terminal domain"/>
    <property type="match status" value="1"/>
</dbReference>
<dbReference type="HAMAP" id="MF_00741">
    <property type="entry name" value="AIRS"/>
    <property type="match status" value="1"/>
</dbReference>
<dbReference type="InterPro" id="IPR010918">
    <property type="entry name" value="PurM-like_C_dom"/>
</dbReference>
<dbReference type="InterPro" id="IPR036676">
    <property type="entry name" value="PurM-like_C_sf"/>
</dbReference>
<dbReference type="InterPro" id="IPR016188">
    <property type="entry name" value="PurM-like_N"/>
</dbReference>
<dbReference type="InterPro" id="IPR036921">
    <property type="entry name" value="PurM-like_N_sf"/>
</dbReference>
<dbReference type="InterPro" id="IPR004733">
    <property type="entry name" value="PurM_cligase"/>
</dbReference>
<dbReference type="NCBIfam" id="TIGR00878">
    <property type="entry name" value="purM"/>
    <property type="match status" value="1"/>
</dbReference>
<dbReference type="PANTHER" id="PTHR10520:SF12">
    <property type="entry name" value="TRIFUNCTIONAL PURINE BIOSYNTHETIC PROTEIN ADENOSINE-3"/>
    <property type="match status" value="1"/>
</dbReference>
<dbReference type="PANTHER" id="PTHR10520">
    <property type="entry name" value="TRIFUNCTIONAL PURINE BIOSYNTHETIC PROTEIN ADENOSINE-3-RELATED"/>
    <property type="match status" value="1"/>
</dbReference>
<dbReference type="Pfam" id="PF00586">
    <property type="entry name" value="AIRS"/>
    <property type="match status" value="1"/>
</dbReference>
<dbReference type="Pfam" id="PF02769">
    <property type="entry name" value="AIRS_C"/>
    <property type="match status" value="1"/>
</dbReference>
<dbReference type="SUPFAM" id="SSF56042">
    <property type="entry name" value="PurM C-terminal domain-like"/>
    <property type="match status" value="1"/>
</dbReference>
<dbReference type="SUPFAM" id="SSF55326">
    <property type="entry name" value="PurM N-terminal domain-like"/>
    <property type="match status" value="1"/>
</dbReference>
<gene>
    <name evidence="1" type="primary">purM</name>
    <name type="ordered locus">PMT9312_1681</name>
</gene>
<feature type="chain" id="PRO_0000258380" description="Phosphoribosylformylglycinamidine cyclo-ligase">
    <location>
        <begin position="1"/>
        <end position="347"/>
    </location>
</feature>
<keyword id="KW-0067">ATP-binding</keyword>
<keyword id="KW-0963">Cytoplasm</keyword>
<keyword id="KW-0436">Ligase</keyword>
<keyword id="KW-0547">Nucleotide-binding</keyword>
<keyword id="KW-0658">Purine biosynthesis</keyword>
<organism>
    <name type="scientific">Prochlorococcus marinus (strain MIT 9312)</name>
    <dbReference type="NCBI Taxonomy" id="74546"/>
    <lineage>
        <taxon>Bacteria</taxon>
        <taxon>Bacillati</taxon>
        <taxon>Cyanobacteriota</taxon>
        <taxon>Cyanophyceae</taxon>
        <taxon>Synechococcales</taxon>
        <taxon>Prochlorococcaceae</taxon>
        <taxon>Prochlorococcus</taxon>
    </lineage>
</organism>
<protein>
    <recommendedName>
        <fullName evidence="1">Phosphoribosylformylglycinamidine cyclo-ligase</fullName>
        <ecNumber evidence="1">6.3.3.1</ecNumber>
    </recommendedName>
    <alternativeName>
        <fullName evidence="1">AIR synthase</fullName>
    </alternativeName>
    <alternativeName>
        <fullName evidence="1">AIRS</fullName>
    </alternativeName>
    <alternativeName>
        <fullName evidence="1">Phosphoribosyl-aminoimidazole synthetase</fullName>
    </alternativeName>
</protein>
<name>PUR5_PROM9</name>
<sequence>MDYKTSGVDIEAGREFVSEIKQAVEGTHTSNVIDGIGGFGGLFRIPVDSFKKPVLVSGTDGVGTKLELAQSKNFHFEVGIDLVAMCMNDIITCGAKPLFFLDYIATGKLDKKQLLQVVQGISHGCGENNCSLLGGETAEMPGFYSNNKYDLAGFCVGIVDEDKLINGKKISENDLIIALKSNGVHSNGFSLVRKIIQNNNQLDKEFEKVSHLNFYDELLKPTKIYNNVVNQILSENIEIKAMSHITGGGIPENLPRCIPSDFIPYINTNSWEIPILFKFLKEKGTIPEKDFWNTFNLGVGFCLIIDKQFKDSILNICKDHDIDSWEIGKIVRKNDSTISKFLPEILT</sequence>
<comment type="catalytic activity">
    <reaction evidence="1">
        <text>2-formamido-N(1)-(5-O-phospho-beta-D-ribosyl)acetamidine + ATP = 5-amino-1-(5-phospho-beta-D-ribosyl)imidazole + ADP + phosphate + H(+)</text>
        <dbReference type="Rhea" id="RHEA:23032"/>
        <dbReference type="ChEBI" id="CHEBI:15378"/>
        <dbReference type="ChEBI" id="CHEBI:30616"/>
        <dbReference type="ChEBI" id="CHEBI:43474"/>
        <dbReference type="ChEBI" id="CHEBI:137981"/>
        <dbReference type="ChEBI" id="CHEBI:147287"/>
        <dbReference type="ChEBI" id="CHEBI:456216"/>
        <dbReference type="EC" id="6.3.3.1"/>
    </reaction>
</comment>
<comment type="pathway">
    <text evidence="1">Purine metabolism; IMP biosynthesis via de novo pathway; 5-amino-1-(5-phospho-D-ribosyl)imidazole from N(2)-formyl-N(1)-(5-phospho-D-ribosyl)glycinamide: step 2/2.</text>
</comment>
<comment type="subcellular location">
    <subcellularLocation>
        <location evidence="1">Cytoplasm</location>
    </subcellularLocation>
</comment>
<comment type="similarity">
    <text evidence="1">Belongs to the AIR synthase family.</text>
</comment>
<reference key="1">
    <citation type="journal article" date="2006" name="Science">
        <title>Genomic islands and the ecology and evolution of Prochlorococcus.</title>
        <authorList>
            <person name="Coleman M.L."/>
            <person name="Sullivan M.B."/>
            <person name="Martiny A.C."/>
            <person name="Steglich C."/>
            <person name="Barry K."/>
            <person name="Delong E.F."/>
            <person name="Chisholm S.W."/>
        </authorList>
    </citation>
    <scope>NUCLEOTIDE SEQUENCE [LARGE SCALE GENOMIC DNA]</scope>
    <source>
        <strain>MIT 9312</strain>
    </source>
</reference>
<accession>Q318F3</accession>